<gene>
    <name type="primary">MT-CYB</name>
    <name type="synonym">COB</name>
    <name type="synonym">CYTB</name>
    <name type="synonym">MTCYB</name>
</gene>
<geneLocation type="mitochondrion"/>
<sequence>MTNIRKTHPLLKIVNHSLIDLPAPSNISAWWNFGSLLGLCLIIQILTGLFLAMHYTSDTTTAFSSVTHICRDVNHGWLIRYLHANGASMFFICLYMHVGRGIYYGSYTYLETWNIGILLLFTVMATAFMGYVLPWGQMSFWGATVITNLLSAIPYIGTSLVEWIWGGFSVDKATLTRFFAFHFILPFIIAALVMVHLLFLHETGSNNPSGIPSNSDKIPFHPYYTIKDALGFLMLITLLLLLALFAPDLLGDPDNYSPANPLNTPPHIKPEWYFLFAYAILRSIPNKLGGVLALVMSILVLAIIPLLHTSKQRSMMFRPLSQTLFWILVADLMTLTWIGAQPVEHPFTTIGQVASVLYFALILILMPLAGLIENKILKW</sequence>
<dbReference type="EMBL" id="AY292735">
    <property type="protein sequence ID" value="AAS54931.1"/>
    <property type="molecule type" value="Genomic_DNA"/>
</dbReference>
<dbReference type="SMR" id="Q6ELU9"/>
<dbReference type="GO" id="GO:0005743">
    <property type="term" value="C:mitochondrial inner membrane"/>
    <property type="evidence" value="ECO:0007669"/>
    <property type="project" value="UniProtKB-SubCell"/>
</dbReference>
<dbReference type="GO" id="GO:0045275">
    <property type="term" value="C:respiratory chain complex III"/>
    <property type="evidence" value="ECO:0007669"/>
    <property type="project" value="InterPro"/>
</dbReference>
<dbReference type="GO" id="GO:0046872">
    <property type="term" value="F:metal ion binding"/>
    <property type="evidence" value="ECO:0007669"/>
    <property type="project" value="UniProtKB-KW"/>
</dbReference>
<dbReference type="GO" id="GO:0008121">
    <property type="term" value="F:ubiquinol-cytochrome-c reductase activity"/>
    <property type="evidence" value="ECO:0007669"/>
    <property type="project" value="InterPro"/>
</dbReference>
<dbReference type="GO" id="GO:0006122">
    <property type="term" value="P:mitochondrial electron transport, ubiquinol to cytochrome c"/>
    <property type="evidence" value="ECO:0007669"/>
    <property type="project" value="TreeGrafter"/>
</dbReference>
<dbReference type="CDD" id="cd00290">
    <property type="entry name" value="cytochrome_b_C"/>
    <property type="match status" value="1"/>
</dbReference>
<dbReference type="CDD" id="cd00284">
    <property type="entry name" value="Cytochrome_b_N"/>
    <property type="match status" value="1"/>
</dbReference>
<dbReference type="FunFam" id="1.20.810.10:FF:000002">
    <property type="entry name" value="Cytochrome b"/>
    <property type="match status" value="1"/>
</dbReference>
<dbReference type="Gene3D" id="1.20.810.10">
    <property type="entry name" value="Cytochrome Bc1 Complex, Chain C"/>
    <property type="match status" value="1"/>
</dbReference>
<dbReference type="InterPro" id="IPR005798">
    <property type="entry name" value="Cyt_b/b6_C"/>
</dbReference>
<dbReference type="InterPro" id="IPR036150">
    <property type="entry name" value="Cyt_b/b6_C_sf"/>
</dbReference>
<dbReference type="InterPro" id="IPR005797">
    <property type="entry name" value="Cyt_b/b6_N"/>
</dbReference>
<dbReference type="InterPro" id="IPR027387">
    <property type="entry name" value="Cytb/b6-like_sf"/>
</dbReference>
<dbReference type="InterPro" id="IPR030689">
    <property type="entry name" value="Cytochrome_b"/>
</dbReference>
<dbReference type="InterPro" id="IPR048260">
    <property type="entry name" value="Cytochrome_b_C_euk/bac"/>
</dbReference>
<dbReference type="InterPro" id="IPR048259">
    <property type="entry name" value="Cytochrome_b_N_euk/bac"/>
</dbReference>
<dbReference type="InterPro" id="IPR016174">
    <property type="entry name" value="Di-haem_cyt_TM"/>
</dbReference>
<dbReference type="PANTHER" id="PTHR19271">
    <property type="entry name" value="CYTOCHROME B"/>
    <property type="match status" value="1"/>
</dbReference>
<dbReference type="PANTHER" id="PTHR19271:SF16">
    <property type="entry name" value="CYTOCHROME B"/>
    <property type="match status" value="1"/>
</dbReference>
<dbReference type="Pfam" id="PF00032">
    <property type="entry name" value="Cytochrom_B_C"/>
    <property type="match status" value="1"/>
</dbReference>
<dbReference type="Pfam" id="PF00033">
    <property type="entry name" value="Cytochrome_B"/>
    <property type="match status" value="1"/>
</dbReference>
<dbReference type="PIRSF" id="PIRSF038885">
    <property type="entry name" value="COB"/>
    <property type="match status" value="1"/>
</dbReference>
<dbReference type="SUPFAM" id="SSF81648">
    <property type="entry name" value="a domain/subunit of cytochrome bc1 complex (Ubiquinol-cytochrome c reductase)"/>
    <property type="match status" value="1"/>
</dbReference>
<dbReference type="SUPFAM" id="SSF81342">
    <property type="entry name" value="Transmembrane di-heme cytochromes"/>
    <property type="match status" value="1"/>
</dbReference>
<dbReference type="PROSITE" id="PS51003">
    <property type="entry name" value="CYTB_CTER"/>
    <property type="match status" value="1"/>
</dbReference>
<dbReference type="PROSITE" id="PS51002">
    <property type="entry name" value="CYTB_NTER"/>
    <property type="match status" value="1"/>
</dbReference>
<name>CYB_PRORU</name>
<keyword id="KW-0249">Electron transport</keyword>
<keyword id="KW-0349">Heme</keyword>
<keyword id="KW-0408">Iron</keyword>
<keyword id="KW-0472">Membrane</keyword>
<keyword id="KW-0479">Metal-binding</keyword>
<keyword id="KW-0496">Mitochondrion</keyword>
<keyword id="KW-0999">Mitochondrion inner membrane</keyword>
<keyword id="KW-0679">Respiratory chain</keyword>
<keyword id="KW-0812">Transmembrane</keyword>
<keyword id="KW-1133">Transmembrane helix</keyword>
<keyword id="KW-0813">Transport</keyword>
<keyword id="KW-0830">Ubiquinone</keyword>
<reference key="1">
    <citation type="journal article" date="2004" name="Syst. Biol.">
        <title>A molecular supermatrix of the rabbits and hares (Leporidae) allows for the identification of five intercontinental exchanges during the Miocene.</title>
        <authorList>
            <person name="Matthee C.A."/>
            <person name="van Vuuren B.J."/>
            <person name="Bell D."/>
            <person name="Robinson T.J."/>
        </authorList>
    </citation>
    <scope>NUCLEOTIDE SEQUENCE [GENOMIC DNA]</scope>
</reference>
<protein>
    <recommendedName>
        <fullName>Cytochrome b</fullName>
    </recommendedName>
    <alternativeName>
        <fullName>Complex III subunit 3</fullName>
    </alternativeName>
    <alternativeName>
        <fullName>Complex III subunit III</fullName>
    </alternativeName>
    <alternativeName>
        <fullName>Cytochrome b-c1 complex subunit 3</fullName>
    </alternativeName>
    <alternativeName>
        <fullName>Ubiquinol-cytochrome-c reductase complex cytochrome b subunit</fullName>
    </alternativeName>
</protein>
<evidence type="ECO:0000250" key="1"/>
<evidence type="ECO:0000250" key="2">
    <source>
        <dbReference type="UniProtKB" id="P00157"/>
    </source>
</evidence>
<evidence type="ECO:0000255" key="3">
    <source>
        <dbReference type="PROSITE-ProRule" id="PRU00967"/>
    </source>
</evidence>
<evidence type="ECO:0000255" key="4">
    <source>
        <dbReference type="PROSITE-ProRule" id="PRU00968"/>
    </source>
</evidence>
<organism>
    <name type="scientific">Pronolagus rupestris</name>
    <name type="common">Smith's red rock hare</name>
    <dbReference type="NCBI Taxonomy" id="42061"/>
    <lineage>
        <taxon>Eukaryota</taxon>
        <taxon>Metazoa</taxon>
        <taxon>Chordata</taxon>
        <taxon>Craniata</taxon>
        <taxon>Vertebrata</taxon>
        <taxon>Euteleostomi</taxon>
        <taxon>Mammalia</taxon>
        <taxon>Eutheria</taxon>
        <taxon>Euarchontoglires</taxon>
        <taxon>Glires</taxon>
        <taxon>Lagomorpha</taxon>
        <taxon>Leporidae</taxon>
        <taxon>Pronolagus</taxon>
    </lineage>
</organism>
<proteinExistence type="inferred from homology"/>
<comment type="function">
    <text evidence="2">Component of the ubiquinol-cytochrome c reductase complex (complex III or cytochrome b-c1 complex) that is part of the mitochondrial respiratory chain. The b-c1 complex mediates electron transfer from ubiquinol to cytochrome c. Contributes to the generation of a proton gradient across the mitochondrial membrane that is then used for ATP synthesis.</text>
</comment>
<comment type="cofactor">
    <cofactor evidence="2">
        <name>heme b</name>
        <dbReference type="ChEBI" id="CHEBI:60344"/>
    </cofactor>
    <text evidence="2">Binds 2 heme b groups non-covalently.</text>
</comment>
<comment type="subunit">
    <text evidence="2">The cytochrome bc1 complex contains 11 subunits: 3 respiratory subunits (MT-CYB, CYC1 and UQCRFS1), 2 core proteins (UQCRC1 and UQCRC2) and 6 low-molecular weight proteins (UQCRH/QCR6, UQCRB/QCR7, UQCRQ/QCR8, UQCR10/QCR9, UQCR11/QCR10 and a cleavage product of UQCRFS1). This cytochrome bc1 complex then forms a dimer.</text>
</comment>
<comment type="subcellular location">
    <subcellularLocation>
        <location evidence="2">Mitochondrion inner membrane</location>
        <topology evidence="2">Multi-pass membrane protein</topology>
    </subcellularLocation>
</comment>
<comment type="miscellaneous">
    <text evidence="1">Heme 1 (or BL or b562) is low-potential and absorbs at about 562 nm, and heme 2 (or BH or b566) is high-potential and absorbs at about 566 nm.</text>
</comment>
<comment type="similarity">
    <text evidence="3 4">Belongs to the cytochrome b family.</text>
</comment>
<comment type="caution">
    <text evidence="2">The full-length protein contains only eight transmembrane helices, not nine as predicted by bioinformatics tools.</text>
</comment>
<accession>Q6ELU9</accession>
<feature type="chain" id="PRO_0000061443" description="Cytochrome b">
    <location>
        <begin position="1"/>
        <end position="379"/>
    </location>
</feature>
<feature type="transmembrane region" description="Helical" evidence="2">
    <location>
        <begin position="33"/>
        <end position="53"/>
    </location>
</feature>
<feature type="transmembrane region" description="Helical" evidence="2">
    <location>
        <begin position="77"/>
        <end position="98"/>
    </location>
</feature>
<feature type="transmembrane region" description="Helical" evidence="2">
    <location>
        <begin position="113"/>
        <end position="133"/>
    </location>
</feature>
<feature type="transmembrane region" description="Helical" evidence="2">
    <location>
        <begin position="178"/>
        <end position="198"/>
    </location>
</feature>
<feature type="transmembrane region" description="Helical" evidence="2">
    <location>
        <begin position="226"/>
        <end position="246"/>
    </location>
</feature>
<feature type="transmembrane region" description="Helical" evidence="2">
    <location>
        <begin position="288"/>
        <end position="308"/>
    </location>
</feature>
<feature type="transmembrane region" description="Helical" evidence="2">
    <location>
        <begin position="320"/>
        <end position="340"/>
    </location>
</feature>
<feature type="transmembrane region" description="Helical" evidence="2">
    <location>
        <begin position="347"/>
        <end position="367"/>
    </location>
</feature>
<feature type="binding site" description="axial binding residue" evidence="2">
    <location>
        <position position="83"/>
    </location>
    <ligand>
        <name>heme b</name>
        <dbReference type="ChEBI" id="CHEBI:60344"/>
        <label>b562</label>
    </ligand>
    <ligandPart>
        <name>Fe</name>
        <dbReference type="ChEBI" id="CHEBI:18248"/>
    </ligandPart>
</feature>
<feature type="binding site" description="axial binding residue" evidence="2">
    <location>
        <position position="97"/>
    </location>
    <ligand>
        <name>heme b</name>
        <dbReference type="ChEBI" id="CHEBI:60344"/>
        <label>b566</label>
    </ligand>
    <ligandPart>
        <name>Fe</name>
        <dbReference type="ChEBI" id="CHEBI:18248"/>
    </ligandPart>
</feature>
<feature type="binding site" description="axial binding residue" evidence="2">
    <location>
        <position position="182"/>
    </location>
    <ligand>
        <name>heme b</name>
        <dbReference type="ChEBI" id="CHEBI:60344"/>
        <label>b562</label>
    </ligand>
    <ligandPart>
        <name>Fe</name>
        <dbReference type="ChEBI" id="CHEBI:18248"/>
    </ligandPart>
</feature>
<feature type="binding site" description="axial binding residue" evidence="2">
    <location>
        <position position="196"/>
    </location>
    <ligand>
        <name>heme b</name>
        <dbReference type="ChEBI" id="CHEBI:60344"/>
        <label>b566</label>
    </ligand>
    <ligandPart>
        <name>Fe</name>
        <dbReference type="ChEBI" id="CHEBI:18248"/>
    </ligandPart>
</feature>
<feature type="binding site" evidence="2">
    <location>
        <position position="201"/>
    </location>
    <ligand>
        <name>a ubiquinone</name>
        <dbReference type="ChEBI" id="CHEBI:16389"/>
    </ligand>
</feature>